<gene>
    <name type="primary">acyP</name>
    <name type="ordered locus">Nwi_1735</name>
</gene>
<dbReference type="EC" id="3.6.1.7"/>
<dbReference type="EMBL" id="CP000115">
    <property type="protein sequence ID" value="ABA04996.1"/>
    <property type="molecule type" value="Genomic_DNA"/>
</dbReference>
<dbReference type="RefSeq" id="WP_011314992.1">
    <property type="nucleotide sequence ID" value="NC_007406.1"/>
</dbReference>
<dbReference type="SMR" id="Q3SRU5"/>
<dbReference type="STRING" id="323098.Nwi_1735"/>
<dbReference type="KEGG" id="nwi:Nwi_1735"/>
<dbReference type="eggNOG" id="COG1254">
    <property type="taxonomic scope" value="Bacteria"/>
</dbReference>
<dbReference type="HOGENOM" id="CLU_141932_3_2_5"/>
<dbReference type="OrthoDB" id="5295388at2"/>
<dbReference type="Proteomes" id="UP000002531">
    <property type="component" value="Chromosome"/>
</dbReference>
<dbReference type="GO" id="GO:0003998">
    <property type="term" value="F:acylphosphatase activity"/>
    <property type="evidence" value="ECO:0007669"/>
    <property type="project" value="UniProtKB-EC"/>
</dbReference>
<dbReference type="Gene3D" id="3.30.70.100">
    <property type="match status" value="1"/>
</dbReference>
<dbReference type="InterPro" id="IPR020456">
    <property type="entry name" value="Acylphosphatase"/>
</dbReference>
<dbReference type="InterPro" id="IPR001792">
    <property type="entry name" value="Acylphosphatase-like_dom"/>
</dbReference>
<dbReference type="InterPro" id="IPR036046">
    <property type="entry name" value="Acylphosphatase-like_dom_sf"/>
</dbReference>
<dbReference type="InterPro" id="IPR017968">
    <property type="entry name" value="Acylphosphatase_CS"/>
</dbReference>
<dbReference type="NCBIfam" id="NF010996">
    <property type="entry name" value="PRK14421.1"/>
    <property type="match status" value="1"/>
</dbReference>
<dbReference type="PANTHER" id="PTHR47268">
    <property type="entry name" value="ACYLPHOSPHATASE"/>
    <property type="match status" value="1"/>
</dbReference>
<dbReference type="PANTHER" id="PTHR47268:SF4">
    <property type="entry name" value="ACYLPHOSPHATASE"/>
    <property type="match status" value="1"/>
</dbReference>
<dbReference type="Pfam" id="PF00708">
    <property type="entry name" value="Acylphosphatase"/>
    <property type="match status" value="1"/>
</dbReference>
<dbReference type="SUPFAM" id="SSF54975">
    <property type="entry name" value="Acylphosphatase/BLUF domain-like"/>
    <property type="match status" value="1"/>
</dbReference>
<dbReference type="PROSITE" id="PS00150">
    <property type="entry name" value="ACYLPHOSPHATASE_1"/>
    <property type="match status" value="1"/>
</dbReference>
<dbReference type="PROSITE" id="PS00151">
    <property type="entry name" value="ACYLPHOSPHATASE_2"/>
    <property type="match status" value="1"/>
</dbReference>
<dbReference type="PROSITE" id="PS51160">
    <property type="entry name" value="ACYLPHOSPHATASE_3"/>
    <property type="match status" value="1"/>
</dbReference>
<proteinExistence type="inferred from homology"/>
<protein>
    <recommendedName>
        <fullName>Acylphosphatase</fullName>
        <ecNumber>3.6.1.7</ecNumber>
    </recommendedName>
    <alternativeName>
        <fullName>Acylphosphate phosphohydrolase</fullName>
    </alternativeName>
</protein>
<accession>Q3SRU5</accession>
<comment type="catalytic activity">
    <reaction>
        <text>an acyl phosphate + H2O = a carboxylate + phosphate + H(+)</text>
        <dbReference type="Rhea" id="RHEA:14965"/>
        <dbReference type="ChEBI" id="CHEBI:15377"/>
        <dbReference type="ChEBI" id="CHEBI:15378"/>
        <dbReference type="ChEBI" id="CHEBI:29067"/>
        <dbReference type="ChEBI" id="CHEBI:43474"/>
        <dbReference type="ChEBI" id="CHEBI:59918"/>
        <dbReference type="EC" id="3.6.1.7"/>
    </reaction>
</comment>
<comment type="similarity">
    <text evidence="2">Belongs to the acylphosphatase family.</text>
</comment>
<feature type="chain" id="PRO_0000326758" description="Acylphosphatase">
    <location>
        <begin position="1"/>
        <end position="99"/>
    </location>
</feature>
<feature type="domain" description="Acylphosphatase-like" evidence="1">
    <location>
        <begin position="5"/>
        <end position="97"/>
    </location>
</feature>
<feature type="active site" evidence="1">
    <location>
        <position position="20"/>
    </location>
</feature>
<feature type="active site" evidence="1">
    <location>
        <position position="38"/>
    </location>
</feature>
<sequence>MHEVVRQVMIRGRVQGVGFRYWTMREAIRFGVGGWVRNRRDGSVEALFAGSTEAVAEMITRCRSGPEFARVDDIEDQPVAANALKMIRPGERFSQLPTV</sequence>
<reference key="1">
    <citation type="journal article" date="2006" name="Appl. Environ. Microbiol.">
        <title>Genome sequence of the chemolithoautotrophic nitrite-oxidizing bacterium Nitrobacter winogradskyi Nb-255.</title>
        <authorList>
            <person name="Starkenburg S.R."/>
            <person name="Chain P.S.G."/>
            <person name="Sayavedra-Soto L.A."/>
            <person name="Hauser L."/>
            <person name="Land M.L."/>
            <person name="Larimer F.W."/>
            <person name="Malfatti S.A."/>
            <person name="Klotz M.G."/>
            <person name="Bottomley P.J."/>
            <person name="Arp D.J."/>
            <person name="Hickey W.J."/>
        </authorList>
    </citation>
    <scope>NUCLEOTIDE SEQUENCE [LARGE SCALE GENOMIC DNA]</scope>
    <source>
        <strain>ATCC 25391 / DSM 10237 / CIP 104748 / NCIMB 11846 / Nb-255</strain>
    </source>
</reference>
<name>ACYP_NITWN</name>
<evidence type="ECO:0000255" key="1">
    <source>
        <dbReference type="PROSITE-ProRule" id="PRU00520"/>
    </source>
</evidence>
<evidence type="ECO:0000305" key="2"/>
<keyword id="KW-0378">Hydrolase</keyword>
<keyword id="KW-1185">Reference proteome</keyword>
<organism>
    <name type="scientific">Nitrobacter winogradskyi (strain ATCC 25391 / DSM 10237 / CIP 104748 / NCIMB 11846 / Nb-255)</name>
    <dbReference type="NCBI Taxonomy" id="323098"/>
    <lineage>
        <taxon>Bacteria</taxon>
        <taxon>Pseudomonadati</taxon>
        <taxon>Pseudomonadota</taxon>
        <taxon>Alphaproteobacteria</taxon>
        <taxon>Hyphomicrobiales</taxon>
        <taxon>Nitrobacteraceae</taxon>
        <taxon>Nitrobacter</taxon>
    </lineage>
</organism>